<protein>
    <recommendedName>
        <fullName evidence="9">Procathepsin L</fullName>
        <ecNumber evidence="3">3.4.22.15</ecNumber>
    </recommendedName>
    <alternativeName>
        <fullName>Cathepsin L1</fullName>
    </alternativeName>
    <component>
        <recommendedName>
            <fullName>Cathepsin L</fullName>
        </recommendedName>
    </component>
    <component>
        <recommendedName>
            <fullName>Cathepsin L heavy chain</fullName>
        </recommendedName>
    </component>
    <component>
        <recommendedName>
            <fullName>Cathepsin L light chain</fullName>
        </recommendedName>
    </component>
</protein>
<comment type="function">
    <text evidence="1 2 3 8">Thiol protease important for the overall degradation of proteins in lysosomes (By similarity). Plays a critical for normal cellular functions such as general protein turnover, antigen processing and bone remodeling. Involved in the solubilization of cross-linked TG/thyroglobulin and in the subsequent release of thyroid hormone thyroxine (T4) by limited proteolysis of TG/thyroglobulin in the thyroid follicle lumen (By similarity). In neuroendocrine chromaffin cells secretory vesicles, catalyzes the prohormone proenkephalin processing to the active enkephalin peptide neurotransmitter (PubMed:12869695). In thymus, regulates CD4(+) T cell positive selection by generating the major histocompatibility complex class II (MHCII) bound peptide ligands presented by cortical thymic epithelial cells. Also mediates invariant chain processing in cortical thymic epithelial cells. Major elastin-degrading enzyme at neutral pH. Accumulates as a mature and active enzyme in the extracellular space of antigen presenting cells (APCs) to regulate degradation of the extracellular matrix in the course of inflammation (By similarity). Secreted form generates endostatin from COL18A1 (By similarity). Critical for cardiac morphology and function. Plays an important role in hair follicle morphogenesis and cycling, as well as epidermal differentiation (By similarity). Required for maximal stimulation of steroidogenesis by TIMP1 (By similarity).</text>
</comment>
<comment type="catalytic activity">
    <reaction>
        <text>Specificity close to that of papain. As compared to cathepsin B, cathepsin L exhibits higher activity toward protein substrates, but has little activity on Z-Arg-Arg-NHMec, and no peptidyl-dipeptidase activity.</text>
        <dbReference type="EC" id="3.4.22.15"/>
    </reaction>
</comment>
<comment type="activity regulation">
    <text evidence="1 3">Inhibited by the propeptide produced by autocleavage (By similarity). Long isoform of CD74/Ii chain stabilizes the conformation of mature CTSL by binding to its active site and serving as a chaperone to help maintain a pool of mature enzyme in endocytic compartments and extracellular space of APCs. IFNG enhances the conversion into the CTSL mature and active form (By similarity). Inhibited by CST6. Inhibited by the glycopeptide antibiotic teicoplanin. Inhibited by amantadine (By similarity).</text>
</comment>
<comment type="subunit">
    <text evidence="1">Dimer of a heavy and a light chain linked by disulfide bonds. Interacts with Long isoform of CD74/Ii chain; the interaction stabilizes the conformation of mature CTSL.</text>
</comment>
<comment type="subcellular location">
    <subcellularLocation>
        <location evidence="1">Lysosome</location>
    </subcellularLocation>
    <subcellularLocation>
        <location evidence="1">Apical cell membrane</location>
        <topology evidence="1">Peripheral membrane protein</topology>
        <orientation evidence="1">Extracellular side</orientation>
    </subcellularLocation>
    <subcellularLocation>
        <location evidence="8">Cytoplasmic vesicle</location>
        <location evidence="8">Secretory vesicle</location>
        <location evidence="8">Chromaffin granule</location>
    </subcellularLocation>
    <subcellularLocation>
        <location evidence="1">Secreted</location>
        <location evidence="1">Extracellular space</location>
    </subcellularLocation>
    <subcellularLocation>
        <location evidence="1">Secreted</location>
    </subcellularLocation>
    <text evidence="1">Localizes to the apical membrane of thyroid epithelial cells. Released at extracellular space by activated dendritic cells and macrophages.</text>
</comment>
<comment type="tissue specificity">
    <text evidence="8">Expressed by neuroendocrine chromaffin cells.</text>
</comment>
<comment type="PTM">
    <text evidence="1 3">During export along the endocytic pathway, pro-CTSL undergoes several proteolytic cleavages to generate the CTSL single-chain and two-chain mature forms, composed of a heavy chain linked to a light chain by disulfide bonds (By similarity). Autocleavage; produces the single-chain CTSL after cleavage of the propeptide. The cleavage can be intermolecular (By similarity).</text>
</comment>
<comment type="similarity">
    <text evidence="5 6 7">Belongs to the peptidase C1 family.</text>
</comment>
<organism>
    <name type="scientific">Bos taurus</name>
    <name type="common">Bovine</name>
    <dbReference type="NCBI Taxonomy" id="9913"/>
    <lineage>
        <taxon>Eukaryota</taxon>
        <taxon>Metazoa</taxon>
        <taxon>Chordata</taxon>
        <taxon>Craniata</taxon>
        <taxon>Vertebrata</taxon>
        <taxon>Euteleostomi</taxon>
        <taxon>Mammalia</taxon>
        <taxon>Eutheria</taxon>
        <taxon>Laurasiatheria</taxon>
        <taxon>Artiodactyla</taxon>
        <taxon>Ruminantia</taxon>
        <taxon>Pecora</taxon>
        <taxon>Bovidae</taxon>
        <taxon>Bovinae</taxon>
        <taxon>Bos</taxon>
    </lineage>
</organism>
<reference key="1">
    <citation type="submission" date="1996-09" db="EMBL/GenBank/DDBJ databases">
        <authorList>
            <person name="Voelkel H."/>
            <person name="Schultz J.E."/>
            <person name="Kurz U."/>
        </authorList>
    </citation>
    <scope>NUCLEOTIDE SEQUENCE [MRNA]</scope>
    <source>
        <tissue>Retinal pigment epithelium</tissue>
    </source>
</reference>
<reference key="2">
    <citation type="submission" date="2005-08" db="EMBL/GenBank/DDBJ databases">
        <authorList>
            <consortium name="NIH - Mammalian Gene Collection (MGC) project"/>
        </authorList>
    </citation>
    <scope>NUCLEOTIDE SEQUENCE [LARGE SCALE MRNA]</scope>
    <source>
        <strain>Crossbred X Angus</strain>
        <tissue>Ileum</tissue>
    </source>
</reference>
<reference key="3">
    <citation type="submission" date="1998-09" db="EMBL/GenBank/DDBJ databases">
        <title>Bos taurus cathepsin L gene.</title>
        <authorList>
            <person name="Miyashita N."/>
        </authorList>
    </citation>
    <scope>NUCLEOTIDE SEQUENCE [GENOMIC DNA] OF 1-301</scope>
</reference>
<reference key="4">
    <citation type="journal article" date="1991" name="FEBS Lett.">
        <title>The complete amino acid sequence of bovine cathepsin S and a partial sequence of bovine cathepsin L.</title>
        <authorList>
            <person name="Ritonja A."/>
            <person name="Colic A."/>
            <person name="Dolenc I."/>
            <person name="Ogrinc T."/>
            <person name="Podobnik M."/>
            <person name="Turk V."/>
        </authorList>
    </citation>
    <scope>PROTEIN SEQUENCE OF 114-132 AND 293-311</scope>
</reference>
<reference key="5">
    <citation type="journal article" date="1992" name="Biol. Chem. Hoppe-Seyler">
        <title>Bovine cathepsins S and L: isolation and amino acid sequences.</title>
        <authorList>
            <person name="Dolenc I."/>
            <person name="Ritonja A."/>
            <person name="Colic A."/>
            <person name="Podobnik M."/>
            <person name="Ogrinc T."/>
            <person name="Turk V."/>
        </authorList>
    </citation>
    <scope>PROTEIN SEQUENCE OF 114-132 AND 293-311</scope>
    <source>
        <tissue>Kidney</tissue>
    </source>
</reference>
<reference key="6">
    <citation type="journal article" date="2003" name="Proc. Natl. Acad. Sci. U.S.A.">
        <title>Cathepsin L in secretory vesicles functions as a prohormone-processing enzyme for production of the enkephalin peptide neurotransmitter.</title>
        <authorList>
            <person name="Yasothornsrikul S."/>
            <person name="Greenbaum D."/>
            <person name="Medzihradszky K.F."/>
            <person name="Toneff T."/>
            <person name="Bundey R."/>
            <person name="Miller R."/>
            <person name="Schilling B."/>
            <person name="Petermann I."/>
            <person name="Dehnert J."/>
            <person name="Logvinova A."/>
            <person name="Goldsmith P."/>
            <person name="Neveu J.M."/>
            <person name="Lane W.S."/>
            <person name="Gibson B."/>
            <person name="Reinheckel T."/>
            <person name="Peters C."/>
            <person name="Bogyo M."/>
            <person name="Hook V."/>
        </authorList>
    </citation>
    <scope>FUNCTION</scope>
    <scope>SUBCELLULAR LOCATION</scope>
    <scope>TISSUE SPECIFICITY</scope>
</reference>
<dbReference type="EC" id="3.4.22.15" evidence="3"/>
<dbReference type="EMBL" id="X91755">
    <property type="protein sequence ID" value="CAA62870.1"/>
    <property type="molecule type" value="mRNA"/>
</dbReference>
<dbReference type="EMBL" id="BC102312">
    <property type="protein sequence ID" value="AAI02313.1"/>
    <property type="molecule type" value="mRNA"/>
</dbReference>
<dbReference type="EMBL" id="AB017648">
    <property type="protein sequence ID" value="BAA33398.1"/>
    <property type="molecule type" value="Genomic_DNA"/>
</dbReference>
<dbReference type="PIR" id="S15845">
    <property type="entry name" value="S15845"/>
</dbReference>
<dbReference type="RefSeq" id="NP_776457.1">
    <property type="nucleotide sequence ID" value="NM_174032.2"/>
</dbReference>
<dbReference type="SMR" id="P25975"/>
<dbReference type="FunCoup" id="P25975">
    <property type="interactions" value="1086"/>
</dbReference>
<dbReference type="STRING" id="9913.ENSBTAP00000022710"/>
<dbReference type="BindingDB" id="P25975"/>
<dbReference type="ChEMBL" id="CHEMBL2113"/>
<dbReference type="MEROPS" id="C01.032"/>
<dbReference type="GlyCosmos" id="P25975">
    <property type="glycosylation" value="1 site, No reported glycans"/>
</dbReference>
<dbReference type="GlyGen" id="P25975">
    <property type="glycosylation" value="1 site"/>
</dbReference>
<dbReference type="PaxDb" id="9913-ENSBTAP00000022710"/>
<dbReference type="PeptideAtlas" id="P25975"/>
<dbReference type="Ensembl" id="ENSBTAT00000022710.5">
    <property type="protein sequence ID" value="ENSBTAP00000022710.3"/>
    <property type="gene ID" value="ENSBTAG00000017077.7"/>
</dbReference>
<dbReference type="GeneID" id="281108"/>
<dbReference type="KEGG" id="bta:281108"/>
<dbReference type="CTD" id="1515"/>
<dbReference type="VEuPathDB" id="HostDB:ENSBTAG00000017077"/>
<dbReference type="eggNOG" id="KOG1543">
    <property type="taxonomic scope" value="Eukaryota"/>
</dbReference>
<dbReference type="GeneTree" id="ENSGT00940000154367"/>
<dbReference type="HOGENOM" id="CLU_012184_1_2_1"/>
<dbReference type="InParanoid" id="P25975"/>
<dbReference type="OMA" id="HNGEYSE"/>
<dbReference type="OrthoDB" id="10253408at2759"/>
<dbReference type="TreeFam" id="TF313739"/>
<dbReference type="Reactome" id="R-BTA-1474228">
    <property type="pathway name" value="Degradation of the extracellular matrix"/>
</dbReference>
<dbReference type="Reactome" id="R-BTA-1592389">
    <property type="pathway name" value="Activation of Matrix Metalloproteinases"/>
</dbReference>
<dbReference type="Reactome" id="R-BTA-1679131">
    <property type="pathway name" value="Trafficking and processing of endosomal TLR"/>
</dbReference>
<dbReference type="Reactome" id="R-BTA-2132295">
    <property type="pathway name" value="MHC class II antigen presentation"/>
</dbReference>
<dbReference type="Reactome" id="R-BTA-8939242">
    <property type="pathway name" value="RUNX1 regulates transcription of genes involved in differentiation of keratinocytes"/>
</dbReference>
<dbReference type="PRO" id="PR:P25975"/>
<dbReference type="Proteomes" id="UP000009136">
    <property type="component" value="Chromosome 8"/>
</dbReference>
<dbReference type="Bgee" id="ENSBTAG00000017077">
    <property type="expression patterns" value="Expressed in metanephros cortex and 102 other cell types or tissues"/>
</dbReference>
<dbReference type="GO" id="GO:0016324">
    <property type="term" value="C:apical plasma membrane"/>
    <property type="evidence" value="ECO:0007669"/>
    <property type="project" value="UniProtKB-SubCell"/>
</dbReference>
<dbReference type="GO" id="GO:0042583">
    <property type="term" value="C:chromaffin granule"/>
    <property type="evidence" value="ECO:0000314"/>
    <property type="project" value="UniProtKB"/>
</dbReference>
<dbReference type="GO" id="GO:0005615">
    <property type="term" value="C:extracellular space"/>
    <property type="evidence" value="ECO:0000250"/>
    <property type="project" value="UniProtKB"/>
</dbReference>
<dbReference type="GO" id="GO:0005764">
    <property type="term" value="C:lysosome"/>
    <property type="evidence" value="ECO:0000250"/>
    <property type="project" value="UniProtKB"/>
</dbReference>
<dbReference type="GO" id="GO:0004197">
    <property type="term" value="F:cysteine-type endopeptidase activity"/>
    <property type="evidence" value="ECO:0000250"/>
    <property type="project" value="UniProtKB"/>
</dbReference>
<dbReference type="GO" id="GO:0004175">
    <property type="term" value="F:endopeptidase activity"/>
    <property type="evidence" value="ECO:0000250"/>
    <property type="project" value="UniProtKB"/>
</dbReference>
<dbReference type="GO" id="GO:0046872">
    <property type="term" value="F:metal ion binding"/>
    <property type="evidence" value="ECO:0007669"/>
    <property type="project" value="UniProtKB-KW"/>
</dbReference>
<dbReference type="GO" id="GO:0048002">
    <property type="term" value="P:antigen processing and presentation of peptide antigen"/>
    <property type="evidence" value="ECO:0000250"/>
    <property type="project" value="UniProtKB"/>
</dbReference>
<dbReference type="GO" id="GO:0043373">
    <property type="term" value="P:CD4-positive, alpha-beta T cell lineage commitment"/>
    <property type="evidence" value="ECO:0000250"/>
    <property type="project" value="UniProtKB"/>
</dbReference>
<dbReference type="GO" id="GO:0030574">
    <property type="term" value="P:collagen catabolic process"/>
    <property type="evidence" value="ECO:0000250"/>
    <property type="project" value="UniProtKB"/>
</dbReference>
<dbReference type="GO" id="GO:0060309">
    <property type="term" value="P:elastin catabolic process"/>
    <property type="evidence" value="ECO:0000250"/>
    <property type="project" value="UniProtKB"/>
</dbReference>
<dbReference type="GO" id="GO:0034230">
    <property type="term" value="P:enkephalin processing"/>
    <property type="evidence" value="ECO:0000314"/>
    <property type="project" value="UniProtKB"/>
</dbReference>
<dbReference type="GO" id="GO:0016540">
    <property type="term" value="P:protein autoprocessing"/>
    <property type="evidence" value="ECO:0000250"/>
    <property type="project" value="UniProtKB"/>
</dbReference>
<dbReference type="GO" id="GO:0051603">
    <property type="term" value="P:proteolysis involved in protein catabolic process"/>
    <property type="evidence" value="ECO:0000318"/>
    <property type="project" value="GO_Central"/>
</dbReference>
<dbReference type="GO" id="GO:0031638">
    <property type="term" value="P:zymogen activation"/>
    <property type="evidence" value="ECO:0000250"/>
    <property type="project" value="UniProtKB"/>
</dbReference>
<dbReference type="CDD" id="cd02248">
    <property type="entry name" value="Peptidase_C1A"/>
    <property type="match status" value="1"/>
</dbReference>
<dbReference type="FunFam" id="3.90.70.10:FF:000332">
    <property type="entry name" value="Cathepsin L1"/>
    <property type="match status" value="1"/>
</dbReference>
<dbReference type="Gene3D" id="3.90.70.10">
    <property type="entry name" value="Cysteine proteinases"/>
    <property type="match status" value="1"/>
</dbReference>
<dbReference type="InterPro" id="IPR038765">
    <property type="entry name" value="Papain-like_cys_pep_sf"/>
</dbReference>
<dbReference type="InterPro" id="IPR025661">
    <property type="entry name" value="Pept_asp_AS"/>
</dbReference>
<dbReference type="InterPro" id="IPR000169">
    <property type="entry name" value="Pept_cys_AS"/>
</dbReference>
<dbReference type="InterPro" id="IPR025660">
    <property type="entry name" value="Pept_his_AS"/>
</dbReference>
<dbReference type="InterPro" id="IPR013128">
    <property type="entry name" value="Peptidase_C1A"/>
</dbReference>
<dbReference type="InterPro" id="IPR000668">
    <property type="entry name" value="Peptidase_C1A_C"/>
</dbReference>
<dbReference type="InterPro" id="IPR039417">
    <property type="entry name" value="Peptidase_C1A_papain-like"/>
</dbReference>
<dbReference type="InterPro" id="IPR013201">
    <property type="entry name" value="Prot_inhib_I29"/>
</dbReference>
<dbReference type="PANTHER" id="PTHR12411">
    <property type="entry name" value="CYSTEINE PROTEASE FAMILY C1-RELATED"/>
    <property type="match status" value="1"/>
</dbReference>
<dbReference type="Pfam" id="PF08246">
    <property type="entry name" value="Inhibitor_I29"/>
    <property type="match status" value="1"/>
</dbReference>
<dbReference type="Pfam" id="PF00112">
    <property type="entry name" value="Peptidase_C1"/>
    <property type="match status" value="1"/>
</dbReference>
<dbReference type="PRINTS" id="PR00705">
    <property type="entry name" value="PAPAIN"/>
</dbReference>
<dbReference type="SMART" id="SM00848">
    <property type="entry name" value="Inhibitor_I29"/>
    <property type="match status" value="1"/>
</dbReference>
<dbReference type="SMART" id="SM00645">
    <property type="entry name" value="Pept_C1"/>
    <property type="match status" value="1"/>
</dbReference>
<dbReference type="SUPFAM" id="SSF54001">
    <property type="entry name" value="Cysteine proteinases"/>
    <property type="match status" value="1"/>
</dbReference>
<dbReference type="PROSITE" id="PS00640">
    <property type="entry name" value="THIOL_PROTEASE_ASN"/>
    <property type="match status" value="1"/>
</dbReference>
<dbReference type="PROSITE" id="PS00139">
    <property type="entry name" value="THIOL_PROTEASE_CYS"/>
    <property type="match status" value="1"/>
</dbReference>
<dbReference type="PROSITE" id="PS00639">
    <property type="entry name" value="THIOL_PROTEASE_HIS"/>
    <property type="match status" value="1"/>
</dbReference>
<name>CATL1_BOVIN</name>
<sequence>MNPSFFLTVLCLGVASAAPKLDPNLDAHWHQWKATHRRLYGMNEEEWRRAVWEKNKKIIDLHNQEYSEGKHGFRMAMNAFGDMTNEEFRQVMNGFQNQKHKKGKLFHEPLLVDVPKSVDWTKKGYVTPVKNQGQCGSCWAFSATGALEGQMFRKTGKLVSLSEQNLVDCSRAQGNQGCNGGLMDNAFQYIKDNGGLDSEESYPYLATDTNSCNYKPECSAANDTGFVDIPQREKALMKAVATVGPISVAIDAGHTSFQFYKSGIYYDPDCSSKDLDHGVLVVGYGFEGTDSNNNKFWIVKNSWGPEWGWNGYVKMAKDQNNHCGIATAASYPTV</sequence>
<gene>
    <name type="primary">CTSL</name>
    <name type="synonym">CTSL1</name>
</gene>
<feature type="signal peptide" evidence="2">
    <location>
        <begin position="1"/>
        <end position="17"/>
    </location>
</feature>
<feature type="propeptide" id="PRO_0000026236" description="Activation peptide">
    <location>
        <begin position="18"/>
        <end position="117"/>
    </location>
</feature>
<feature type="chain" id="PRO_0000450784" description="Cathepsin L" evidence="3">
    <location>
        <begin position="118"/>
        <end position="334"/>
    </location>
</feature>
<feature type="chain" id="PRO_0000026237" description="Cathepsin L heavy chain">
    <location>
        <begin position="118"/>
        <end position="289"/>
    </location>
</feature>
<feature type="propeptide" id="PRO_0000026238">
    <location>
        <begin position="290"/>
        <end position="291"/>
    </location>
</feature>
<feature type="chain" id="PRO_0000026239" description="Cathepsin L light chain">
    <location>
        <begin position="292"/>
        <end position="334"/>
    </location>
</feature>
<feature type="active site" evidence="3">
    <location>
        <position position="138"/>
    </location>
</feature>
<feature type="active site" evidence="3">
    <location>
        <position position="277"/>
    </location>
</feature>
<feature type="active site" evidence="3">
    <location>
        <position position="301"/>
    </location>
</feature>
<feature type="binding site" evidence="3">
    <location>
        <position position="163"/>
    </location>
    <ligand>
        <name>Zn(2+)</name>
        <dbReference type="ChEBI" id="CHEBI:29105"/>
        <label>2</label>
    </ligand>
</feature>
<feature type="binding site" evidence="3">
    <location>
        <position position="184"/>
    </location>
    <ligand>
        <name>Zn(2+)</name>
        <dbReference type="ChEBI" id="CHEBI:29105"/>
        <label>3</label>
    </ligand>
</feature>
<feature type="binding site" evidence="3">
    <location>
        <position position="199"/>
    </location>
    <ligand>
        <name>Zn(2+)</name>
        <dbReference type="ChEBI" id="CHEBI:29105"/>
        <label>2</label>
    </ligand>
</feature>
<feature type="binding site" evidence="3">
    <location>
        <position position="228"/>
    </location>
    <ligand>
        <name>Zn(2+)</name>
        <dbReference type="ChEBI" id="CHEBI:29105"/>
        <label>3</label>
    </ligand>
</feature>
<feature type="binding site" evidence="3">
    <location>
        <position position="251"/>
    </location>
    <ligand>
        <name>Zn(2+)</name>
        <dbReference type="ChEBI" id="CHEBI:29105"/>
        <label>5</label>
    </ligand>
</feature>
<feature type="binding site" evidence="3">
    <location>
        <position position="254"/>
    </location>
    <ligand>
        <name>Zn(2+)</name>
        <dbReference type="ChEBI" id="CHEBI:29105"/>
        <label>5</label>
    </ligand>
</feature>
<feature type="binding site" evidence="3">
    <location>
        <position position="274"/>
    </location>
    <ligand>
        <name>Zn(2+)</name>
        <dbReference type="ChEBI" id="CHEBI:29105"/>
        <label>6</label>
    </ligand>
</feature>
<feature type="binding site" evidence="3">
    <location>
        <position position="276"/>
    </location>
    <ligand>
        <name>Zn(2+)</name>
        <dbReference type="ChEBI" id="CHEBI:29105"/>
        <label>7</label>
    </ligand>
</feature>
<feature type="site" description="Cleavage; by autolysis" evidence="3">
    <location>
        <begin position="106"/>
        <end position="107"/>
    </location>
</feature>
<feature type="site" description="Cleavage; by autolysis" evidence="3">
    <location>
        <begin position="107"/>
        <end position="108"/>
    </location>
</feature>
<feature type="site" description="Cleavage; by autolysis" evidence="3">
    <location>
        <begin position="112"/>
        <end position="113"/>
    </location>
</feature>
<feature type="site" description="Cleavage; by autolysis" evidence="3">
    <location>
        <begin position="113"/>
        <end position="114"/>
    </location>
</feature>
<feature type="glycosylation site" description="N-linked (GlcNAc...) asparagine" evidence="4">
    <location>
        <position position="222"/>
    </location>
</feature>
<feature type="disulfide bond" evidence="3">
    <location>
        <begin position="135"/>
        <end position="178"/>
    </location>
</feature>
<feature type="disulfide bond" evidence="3">
    <location>
        <begin position="169"/>
        <end position="212"/>
    </location>
</feature>
<feature type="disulfide bond" description="Interchain (between heavy and light chains)" evidence="3">
    <location>
        <begin position="270"/>
        <end position="323"/>
    </location>
</feature>
<feature type="sequence conflict" description="In Ref. 1; CAA62870." evidence="9" ref="1">
    <original>G</original>
    <variation>A</variation>
    <location>
        <position position="72"/>
    </location>
</feature>
<feature type="sequence conflict" description="In Ref. 4; AA sequence and 5; AA sequence." evidence="9" ref="4 5">
    <original>K</original>
    <variation>W</variation>
    <location>
        <position position="116"/>
    </location>
</feature>
<feature type="sequence conflict" description="In Ref. 1; CAA62870." evidence="9" ref="1">
    <original>S</original>
    <variation>C</variation>
    <location>
        <position position="272"/>
    </location>
</feature>
<feature type="sequence conflict" description="In Ref. 4; AA sequence and 5; AA sequence." evidence="9" ref="4 5">
    <original>P</original>
    <variation>G</variation>
    <location>
        <position position="305"/>
    </location>
</feature>
<feature type="sequence conflict" description="In Ref. 4; AA sequence and 5; AA sequence." evidence="9" ref="4 5">
    <original>N</original>
    <variation>G</variation>
    <location>
        <position position="310"/>
    </location>
</feature>
<keyword id="KW-1003">Cell membrane</keyword>
<keyword id="KW-0968">Cytoplasmic vesicle</keyword>
<keyword id="KW-0903">Direct protein sequencing</keyword>
<keyword id="KW-1015">Disulfide bond</keyword>
<keyword id="KW-0325">Glycoprotein</keyword>
<keyword id="KW-0378">Hydrolase</keyword>
<keyword id="KW-0458">Lysosome</keyword>
<keyword id="KW-0472">Membrane</keyword>
<keyword id="KW-0479">Metal-binding</keyword>
<keyword id="KW-0645">Protease</keyword>
<keyword id="KW-1185">Reference proteome</keyword>
<keyword id="KW-0964">Secreted</keyword>
<keyword id="KW-0732">Signal</keyword>
<keyword id="KW-0788">Thiol protease</keyword>
<keyword id="KW-0862">Zinc</keyword>
<keyword id="KW-0865">Zymogen</keyword>
<accession>P25975</accession>
<accession>O77502</accession>
<accession>Q3T0P2</accession>
<evidence type="ECO:0000250" key="1">
    <source>
        <dbReference type="UniProtKB" id="P06797"/>
    </source>
</evidence>
<evidence type="ECO:0000250" key="2">
    <source>
        <dbReference type="UniProtKB" id="P07154"/>
    </source>
</evidence>
<evidence type="ECO:0000250" key="3">
    <source>
        <dbReference type="UniProtKB" id="P07711"/>
    </source>
</evidence>
<evidence type="ECO:0000255" key="4"/>
<evidence type="ECO:0000255" key="5">
    <source>
        <dbReference type="PROSITE-ProRule" id="PRU10088"/>
    </source>
</evidence>
<evidence type="ECO:0000255" key="6">
    <source>
        <dbReference type="PROSITE-ProRule" id="PRU10089"/>
    </source>
</evidence>
<evidence type="ECO:0000255" key="7">
    <source>
        <dbReference type="PROSITE-ProRule" id="PRU10090"/>
    </source>
</evidence>
<evidence type="ECO:0000269" key="8">
    <source>
    </source>
</evidence>
<evidence type="ECO:0000305" key="9"/>
<proteinExistence type="evidence at protein level"/>